<keyword id="KW-1003">Cell membrane</keyword>
<keyword id="KW-0963">Cytoplasm</keyword>
<keyword id="KW-0449">Lipoprotein</keyword>
<keyword id="KW-0472">Membrane</keyword>
<keyword id="KW-0539">Nucleus</keyword>
<keyword id="KW-0564">Palmitate</keyword>
<keyword id="KW-1185">Reference proteome</keyword>
<keyword id="KW-0734">Signal transduction inhibitor</keyword>
<accession>Q08DH5</accession>
<sequence>MSSAPNGRKKRPSRSTRSSIFQISKPPLQTGDWERRGSGSESAHKSQRALDDCKMLVQEFNTQVALYRELVISIGDVSVSCPSLREEMHKTRTKGCEMARQAHQKLAAISGPEDGEIHPEICRLYIQLQCCLEMYTTEMLKSICLLGSLQFHRKGKEPGGGSKSLDCKIEECAETPALEDSSPSPVDIQQHSWQVSTDIENTERDMREMKNLLSKLRETMPLPLKNQDDSSLLNLTPYPLVRRRKRRFFGLCCLVSS</sequence>
<proteinExistence type="evidence at transcript level"/>
<dbReference type="EMBL" id="BC123745">
    <property type="protein sequence ID" value="AAI23746.1"/>
    <property type="molecule type" value="mRNA"/>
</dbReference>
<dbReference type="RefSeq" id="NP_001070398.1">
    <property type="nucleotide sequence ID" value="NM_001076930.1"/>
</dbReference>
<dbReference type="SMR" id="Q08DH5"/>
<dbReference type="FunCoup" id="Q08DH5">
    <property type="interactions" value="789"/>
</dbReference>
<dbReference type="STRING" id="9913.ENSBTAP00000058084"/>
<dbReference type="PaxDb" id="9913-ENSBTAP00000006815"/>
<dbReference type="Ensembl" id="ENSBTAT00000006815.4">
    <property type="protein sequence ID" value="ENSBTAP00000006815.3"/>
    <property type="gene ID" value="ENSBTAG00000005169.6"/>
</dbReference>
<dbReference type="GeneID" id="613327"/>
<dbReference type="KEGG" id="bta:613327"/>
<dbReference type="CTD" id="401190"/>
<dbReference type="VEuPathDB" id="HostDB:ENSBTAG00000005169"/>
<dbReference type="VGNC" id="VGNC:33924">
    <property type="gene designation" value="RGS7BP"/>
</dbReference>
<dbReference type="eggNOG" id="ENOG502QPUF">
    <property type="taxonomic scope" value="Eukaryota"/>
</dbReference>
<dbReference type="GeneTree" id="ENSGT00940000153725"/>
<dbReference type="HOGENOM" id="CLU_112711_0_0_1"/>
<dbReference type="InParanoid" id="Q08DH5"/>
<dbReference type="OMA" id="KDMRDMK"/>
<dbReference type="OrthoDB" id="9876293at2759"/>
<dbReference type="TreeFam" id="TF330985"/>
<dbReference type="Proteomes" id="UP000009136">
    <property type="component" value="Chromosome 20"/>
</dbReference>
<dbReference type="Bgee" id="ENSBTAG00000005169">
    <property type="expression patterns" value="Expressed in occipital lobe and 73 other cell types or tissues"/>
</dbReference>
<dbReference type="GO" id="GO:0005737">
    <property type="term" value="C:cytoplasm"/>
    <property type="evidence" value="ECO:0007669"/>
    <property type="project" value="UniProtKB-SubCell"/>
</dbReference>
<dbReference type="GO" id="GO:0098978">
    <property type="term" value="C:glutamatergic synapse"/>
    <property type="evidence" value="ECO:0007669"/>
    <property type="project" value="Ensembl"/>
</dbReference>
<dbReference type="GO" id="GO:0043005">
    <property type="term" value="C:neuron projection"/>
    <property type="evidence" value="ECO:0000318"/>
    <property type="project" value="GO_Central"/>
</dbReference>
<dbReference type="GO" id="GO:0005634">
    <property type="term" value="C:nucleus"/>
    <property type="evidence" value="ECO:0000318"/>
    <property type="project" value="GO_Central"/>
</dbReference>
<dbReference type="GO" id="GO:0098794">
    <property type="term" value="C:postsynapse"/>
    <property type="evidence" value="ECO:0000318"/>
    <property type="project" value="GO_Central"/>
</dbReference>
<dbReference type="GO" id="GO:0098839">
    <property type="term" value="C:postsynaptic density membrane"/>
    <property type="evidence" value="ECO:0007669"/>
    <property type="project" value="Ensembl"/>
</dbReference>
<dbReference type="GO" id="GO:0042734">
    <property type="term" value="C:presynaptic membrane"/>
    <property type="evidence" value="ECO:0007669"/>
    <property type="project" value="Ensembl"/>
</dbReference>
<dbReference type="GO" id="GO:0007186">
    <property type="term" value="P:G protein-coupled receptor signaling pathway"/>
    <property type="evidence" value="ECO:0000318"/>
    <property type="project" value="GO_Central"/>
</dbReference>
<dbReference type="GO" id="GO:0009968">
    <property type="term" value="P:negative regulation of signal transduction"/>
    <property type="evidence" value="ECO:0007669"/>
    <property type="project" value="UniProtKB-KW"/>
</dbReference>
<dbReference type="GO" id="GO:0060078">
    <property type="term" value="P:regulation of postsynaptic membrane potential"/>
    <property type="evidence" value="ECO:0007669"/>
    <property type="project" value="Ensembl"/>
</dbReference>
<dbReference type="InterPro" id="IPR026512">
    <property type="entry name" value="RGS7BP/RGS9BP"/>
</dbReference>
<dbReference type="PANTHER" id="PTHR21029">
    <property type="entry name" value="R-SEVEN BINDING PROTEIN (R7BP) HOMOLOG"/>
    <property type="match status" value="1"/>
</dbReference>
<feature type="chain" id="PRO_0000287594" description="Regulator of G-protein signaling 7-binding protein">
    <location>
        <begin position="1"/>
        <end position="257"/>
    </location>
</feature>
<feature type="region of interest" description="Disordered" evidence="3">
    <location>
        <begin position="1"/>
        <end position="45"/>
    </location>
</feature>
<feature type="short sequence motif" description="Nuclear localization signal" evidence="1">
    <location>
        <begin position="242"/>
        <end position="247"/>
    </location>
</feature>
<feature type="compositionally biased region" description="Basic and acidic residues" evidence="3">
    <location>
        <begin position="32"/>
        <end position="45"/>
    </location>
</feature>
<feature type="lipid moiety-binding region" description="S-palmitoyl cysteine" evidence="1">
    <location>
        <position position="252"/>
    </location>
</feature>
<feature type="lipid moiety-binding region" description="S-palmitoyl cysteine" evidence="1">
    <location>
        <position position="253"/>
    </location>
</feature>
<organism>
    <name type="scientific">Bos taurus</name>
    <name type="common">Bovine</name>
    <dbReference type="NCBI Taxonomy" id="9913"/>
    <lineage>
        <taxon>Eukaryota</taxon>
        <taxon>Metazoa</taxon>
        <taxon>Chordata</taxon>
        <taxon>Craniata</taxon>
        <taxon>Vertebrata</taxon>
        <taxon>Euteleostomi</taxon>
        <taxon>Mammalia</taxon>
        <taxon>Eutheria</taxon>
        <taxon>Laurasiatheria</taxon>
        <taxon>Artiodactyla</taxon>
        <taxon>Ruminantia</taxon>
        <taxon>Pecora</taxon>
        <taxon>Bovidae</taxon>
        <taxon>Bovinae</taxon>
        <taxon>Bos</taxon>
    </lineage>
</organism>
<evidence type="ECO:0000250" key="1"/>
<evidence type="ECO:0000250" key="2">
    <source>
        <dbReference type="UniProtKB" id="Q8BQP9"/>
    </source>
</evidence>
<evidence type="ECO:0000256" key="3">
    <source>
        <dbReference type="SAM" id="MobiDB-lite"/>
    </source>
</evidence>
<evidence type="ECO:0000305" key="4"/>
<gene>
    <name type="primary">RGS7BP</name>
    <name type="synonym">R7BP</name>
</gene>
<comment type="function">
    <text evidence="2">Regulator of G protein-coupled receptor (GPCR) signaling. Regulatory subunit of the R7-Gbeta5 complexes that acts by controlling the subcellular location of the R7-Gbeta5 complexes. When palmitoylated, it targets the R7-Gbeta5 complexes to the plasma membrane, leading to inhibit G protein alpha subunits. When it is unpalmitoylated, the R7-Gbeta5 complexes undergo a nuclear/cytoplasmic shuttling. May also act by controlling the proteolytic stability of R7 proteins, probably by protecting them from degradation.</text>
</comment>
<comment type="subunit">
    <text evidence="2">Interacts with 'R7' family proteins RGS6, RGS7, RGS9 and RGS11. Component of some R7-Gbeta5 complex composed of some R7 protein (RGS6, RGS7, RGS9 or RGS11), Gbeta5 (GNB5) and RGS7BP.</text>
</comment>
<comment type="subcellular location">
    <subcellularLocation>
        <location evidence="2">Nucleus</location>
    </subcellularLocation>
    <subcellularLocation>
        <location evidence="2">Cytoplasm</location>
    </subcellularLocation>
    <subcellularLocation>
        <location evidence="2">Cell membrane</location>
        <topology evidence="2">Lipid-anchor</topology>
    </subcellularLocation>
    <text evidence="2">Shuttling between the plasma membrane, the cytoplasm and the nucleus is regulated by palmitoylation.</text>
</comment>
<comment type="domain">
    <text evidence="2">The nuclear localization signal is both required for nuclear localization and palmitoylation.</text>
</comment>
<comment type="PTM">
    <text evidence="2">Palmitoylated. Undergoes rapid palmitoylation turnover. De novo and turnover palmitoylation are both mediated by ZDHHC2. Palmitoylation regulates the cell membrane and nuclear shuttling and the regulation of GPCR signaling. Upon depalmitoylation, it is targeted from the plasma membrane into the nucleus. GPCR signaling inhibits depalmitoylation and promotes localization to the plasma membrane.</text>
</comment>
<comment type="similarity">
    <text evidence="4">Belongs to the RGS7BP/RGS9BP family.</text>
</comment>
<name>R7BP_BOVIN</name>
<reference key="1">
    <citation type="submission" date="2006-09" db="EMBL/GenBank/DDBJ databases">
        <authorList>
            <consortium name="NIH - Mammalian Gene Collection (MGC) project"/>
        </authorList>
    </citation>
    <scope>NUCLEOTIDE SEQUENCE [LARGE SCALE MRNA]</scope>
    <source>
        <strain>Hereford</strain>
        <tissue>Hippocampus</tissue>
    </source>
</reference>
<protein>
    <recommendedName>
        <fullName>Regulator of G-protein signaling 7-binding protein</fullName>
    </recommendedName>
    <alternativeName>
        <fullName>R7 family-binding protein</fullName>
    </alternativeName>
</protein>